<feature type="chain" id="PRO_0000360725" description="Putative metal-sulfur cluster biosynthesis proteins YuaD">
    <location>
        <begin position="1"/>
        <end position="192"/>
    </location>
</feature>
<feature type="domain" description="MOSC" evidence="1">
    <location>
        <begin position="15"/>
        <end position="179"/>
    </location>
</feature>
<feature type="strand" evidence="2">
    <location>
        <begin position="2"/>
        <end position="14"/>
    </location>
</feature>
<feature type="strand" evidence="2">
    <location>
        <begin position="23"/>
        <end position="31"/>
    </location>
</feature>
<feature type="strand" evidence="2">
    <location>
        <begin position="42"/>
        <end position="46"/>
    </location>
</feature>
<feature type="strand" evidence="2">
    <location>
        <begin position="59"/>
        <end position="61"/>
    </location>
</feature>
<feature type="strand" evidence="2">
    <location>
        <begin position="66"/>
        <end position="70"/>
    </location>
</feature>
<feature type="helix" evidence="2">
    <location>
        <begin position="71"/>
        <end position="81"/>
    </location>
</feature>
<feature type="helix" evidence="2">
    <location>
        <begin position="88"/>
        <end position="91"/>
    </location>
</feature>
<feature type="strand" evidence="2">
    <location>
        <begin position="94"/>
        <end position="99"/>
    </location>
</feature>
<feature type="helix" evidence="2">
    <location>
        <begin position="103"/>
        <end position="105"/>
    </location>
</feature>
<feature type="strand" evidence="2">
    <location>
        <begin position="111"/>
        <end position="113"/>
    </location>
</feature>
<feature type="strand" evidence="2">
    <location>
        <begin position="119"/>
        <end position="125"/>
    </location>
</feature>
<feature type="helix" evidence="2">
    <location>
        <begin position="130"/>
        <end position="139"/>
    </location>
</feature>
<feature type="helix" evidence="2">
    <location>
        <begin position="146"/>
        <end position="153"/>
    </location>
</feature>
<feature type="strand" evidence="2">
    <location>
        <begin position="160"/>
        <end position="166"/>
    </location>
</feature>
<feature type="strand" evidence="2">
    <location>
        <begin position="168"/>
        <end position="171"/>
    </location>
</feature>
<feature type="strand" evidence="2">
    <location>
        <begin position="175"/>
        <end position="181"/>
    </location>
</feature>
<proteinExistence type="evidence at protein level"/>
<dbReference type="EMBL" id="AL009126">
    <property type="protein sequence ID" value="CAB15082.1"/>
    <property type="molecule type" value="Genomic_DNA"/>
</dbReference>
<dbReference type="PIR" id="F70005">
    <property type="entry name" value="F70005"/>
</dbReference>
<dbReference type="RefSeq" id="NP_390982.1">
    <property type="nucleotide sequence ID" value="NC_000964.3"/>
</dbReference>
<dbReference type="RefSeq" id="WP_003243361.1">
    <property type="nucleotide sequence ID" value="NZ_OZ025638.1"/>
</dbReference>
<dbReference type="PDB" id="1ORU">
    <property type="method" value="X-ray"/>
    <property type="resolution" value="1.80 A"/>
    <property type="chains" value="A/B=1-192"/>
</dbReference>
<dbReference type="PDBsum" id="1ORU"/>
<dbReference type="SMR" id="O32079"/>
<dbReference type="FunCoup" id="O32079">
    <property type="interactions" value="35"/>
</dbReference>
<dbReference type="STRING" id="224308.BSU31040"/>
<dbReference type="PaxDb" id="224308-BSU31040"/>
<dbReference type="EnsemblBacteria" id="CAB15082">
    <property type="protein sequence ID" value="CAB15082"/>
    <property type="gene ID" value="BSU_31040"/>
</dbReference>
<dbReference type="GeneID" id="937141"/>
<dbReference type="KEGG" id="bsu:BSU31040"/>
<dbReference type="PATRIC" id="fig|224308.179.peg.3364"/>
<dbReference type="eggNOG" id="ENOG502ZBJY">
    <property type="taxonomic scope" value="Bacteria"/>
</dbReference>
<dbReference type="InParanoid" id="O32079"/>
<dbReference type="OrthoDB" id="9808413at2"/>
<dbReference type="BioCyc" id="BSUB:BSU31040-MONOMER"/>
<dbReference type="EvolutionaryTrace" id="O32079"/>
<dbReference type="Proteomes" id="UP000001570">
    <property type="component" value="Chromosome"/>
</dbReference>
<dbReference type="GO" id="GO:0003824">
    <property type="term" value="F:catalytic activity"/>
    <property type="evidence" value="ECO:0007669"/>
    <property type="project" value="InterPro"/>
</dbReference>
<dbReference type="GO" id="GO:0030151">
    <property type="term" value="F:molybdenum ion binding"/>
    <property type="evidence" value="ECO:0007669"/>
    <property type="project" value="InterPro"/>
</dbReference>
<dbReference type="GO" id="GO:0030170">
    <property type="term" value="F:pyridoxal phosphate binding"/>
    <property type="evidence" value="ECO:0007669"/>
    <property type="project" value="InterPro"/>
</dbReference>
<dbReference type="Gene3D" id="2.40.33.20">
    <property type="entry name" value="PK beta-barrel domain-like"/>
    <property type="match status" value="1"/>
</dbReference>
<dbReference type="InterPro" id="IPR005302">
    <property type="entry name" value="MoCF_Sase_C"/>
</dbReference>
<dbReference type="InterPro" id="IPR052716">
    <property type="entry name" value="MOSC_domain"/>
</dbReference>
<dbReference type="InterPro" id="IPR011037">
    <property type="entry name" value="Pyrv_Knase-like_insert_dom_sf"/>
</dbReference>
<dbReference type="PANTHER" id="PTHR36930">
    <property type="entry name" value="METAL-SULFUR CLUSTER BIOSYNTHESIS PROTEINS YUAD-RELATED"/>
    <property type="match status" value="1"/>
</dbReference>
<dbReference type="PANTHER" id="PTHR36930:SF1">
    <property type="entry name" value="MOSC DOMAIN-CONTAINING PROTEIN"/>
    <property type="match status" value="1"/>
</dbReference>
<dbReference type="Pfam" id="PF03473">
    <property type="entry name" value="MOSC"/>
    <property type="match status" value="1"/>
</dbReference>
<dbReference type="SUPFAM" id="SSF50800">
    <property type="entry name" value="PK beta-barrel domain-like"/>
    <property type="match status" value="1"/>
</dbReference>
<dbReference type="PROSITE" id="PS51340">
    <property type="entry name" value="MOSC"/>
    <property type="match status" value="1"/>
</dbReference>
<accession>O32079</accession>
<gene>
    <name type="primary">yuaD</name>
    <name type="ordered locus">BSU31040</name>
</gene>
<protein>
    <recommendedName>
        <fullName>Putative metal-sulfur cluster biosynthesis proteins YuaD</fullName>
    </recommendedName>
</protein>
<organism>
    <name type="scientific">Bacillus subtilis (strain 168)</name>
    <dbReference type="NCBI Taxonomy" id="224308"/>
    <lineage>
        <taxon>Bacteria</taxon>
        <taxon>Bacillati</taxon>
        <taxon>Bacillota</taxon>
        <taxon>Bacilli</taxon>
        <taxon>Bacillales</taxon>
        <taxon>Bacillaceae</taxon>
        <taxon>Bacillus</taxon>
    </lineage>
</organism>
<reference key="1">
    <citation type="journal article" date="1997" name="Nature">
        <title>The complete genome sequence of the Gram-positive bacterium Bacillus subtilis.</title>
        <authorList>
            <person name="Kunst F."/>
            <person name="Ogasawara N."/>
            <person name="Moszer I."/>
            <person name="Albertini A.M."/>
            <person name="Alloni G."/>
            <person name="Azevedo V."/>
            <person name="Bertero M.G."/>
            <person name="Bessieres P."/>
            <person name="Bolotin A."/>
            <person name="Borchert S."/>
            <person name="Borriss R."/>
            <person name="Boursier L."/>
            <person name="Brans A."/>
            <person name="Braun M."/>
            <person name="Brignell S.C."/>
            <person name="Bron S."/>
            <person name="Brouillet S."/>
            <person name="Bruschi C.V."/>
            <person name="Caldwell B."/>
            <person name="Capuano V."/>
            <person name="Carter N.M."/>
            <person name="Choi S.-K."/>
            <person name="Codani J.-J."/>
            <person name="Connerton I.F."/>
            <person name="Cummings N.J."/>
            <person name="Daniel R.A."/>
            <person name="Denizot F."/>
            <person name="Devine K.M."/>
            <person name="Duesterhoeft A."/>
            <person name="Ehrlich S.D."/>
            <person name="Emmerson P.T."/>
            <person name="Entian K.-D."/>
            <person name="Errington J."/>
            <person name="Fabret C."/>
            <person name="Ferrari E."/>
            <person name="Foulger D."/>
            <person name="Fritz C."/>
            <person name="Fujita M."/>
            <person name="Fujita Y."/>
            <person name="Fuma S."/>
            <person name="Galizzi A."/>
            <person name="Galleron N."/>
            <person name="Ghim S.-Y."/>
            <person name="Glaser P."/>
            <person name="Goffeau A."/>
            <person name="Golightly E.J."/>
            <person name="Grandi G."/>
            <person name="Guiseppi G."/>
            <person name="Guy B.J."/>
            <person name="Haga K."/>
            <person name="Haiech J."/>
            <person name="Harwood C.R."/>
            <person name="Henaut A."/>
            <person name="Hilbert H."/>
            <person name="Holsappel S."/>
            <person name="Hosono S."/>
            <person name="Hullo M.-F."/>
            <person name="Itaya M."/>
            <person name="Jones L.-M."/>
            <person name="Joris B."/>
            <person name="Karamata D."/>
            <person name="Kasahara Y."/>
            <person name="Klaerr-Blanchard M."/>
            <person name="Klein C."/>
            <person name="Kobayashi Y."/>
            <person name="Koetter P."/>
            <person name="Koningstein G."/>
            <person name="Krogh S."/>
            <person name="Kumano M."/>
            <person name="Kurita K."/>
            <person name="Lapidus A."/>
            <person name="Lardinois S."/>
            <person name="Lauber J."/>
            <person name="Lazarevic V."/>
            <person name="Lee S.-M."/>
            <person name="Levine A."/>
            <person name="Liu H."/>
            <person name="Masuda S."/>
            <person name="Mauel C."/>
            <person name="Medigue C."/>
            <person name="Medina N."/>
            <person name="Mellado R.P."/>
            <person name="Mizuno M."/>
            <person name="Moestl D."/>
            <person name="Nakai S."/>
            <person name="Noback M."/>
            <person name="Noone D."/>
            <person name="O'Reilly M."/>
            <person name="Ogawa K."/>
            <person name="Ogiwara A."/>
            <person name="Oudega B."/>
            <person name="Park S.-H."/>
            <person name="Parro V."/>
            <person name="Pohl T.M."/>
            <person name="Portetelle D."/>
            <person name="Porwollik S."/>
            <person name="Prescott A.M."/>
            <person name="Presecan E."/>
            <person name="Pujic P."/>
            <person name="Purnelle B."/>
            <person name="Rapoport G."/>
            <person name="Rey M."/>
            <person name="Reynolds S."/>
            <person name="Rieger M."/>
            <person name="Rivolta C."/>
            <person name="Rocha E."/>
            <person name="Roche B."/>
            <person name="Rose M."/>
            <person name="Sadaie Y."/>
            <person name="Sato T."/>
            <person name="Scanlan E."/>
            <person name="Schleich S."/>
            <person name="Schroeter R."/>
            <person name="Scoffone F."/>
            <person name="Sekiguchi J."/>
            <person name="Sekowska A."/>
            <person name="Seror S.J."/>
            <person name="Serror P."/>
            <person name="Shin B.-S."/>
            <person name="Soldo B."/>
            <person name="Sorokin A."/>
            <person name="Tacconi E."/>
            <person name="Takagi T."/>
            <person name="Takahashi H."/>
            <person name="Takemaru K."/>
            <person name="Takeuchi M."/>
            <person name="Tamakoshi A."/>
            <person name="Tanaka T."/>
            <person name="Terpstra P."/>
            <person name="Tognoni A."/>
            <person name="Tosato V."/>
            <person name="Uchiyama S."/>
            <person name="Vandenbol M."/>
            <person name="Vannier F."/>
            <person name="Vassarotti A."/>
            <person name="Viari A."/>
            <person name="Wambutt R."/>
            <person name="Wedler E."/>
            <person name="Wedler H."/>
            <person name="Weitzenegger T."/>
            <person name="Winters P."/>
            <person name="Wipat A."/>
            <person name="Yamamoto H."/>
            <person name="Yamane K."/>
            <person name="Yasumoto K."/>
            <person name="Yata K."/>
            <person name="Yoshida K."/>
            <person name="Yoshikawa H.-F."/>
            <person name="Zumstein E."/>
            <person name="Yoshikawa H."/>
            <person name="Danchin A."/>
        </authorList>
    </citation>
    <scope>NUCLEOTIDE SEQUENCE [LARGE SCALE GENOMIC DNA]</scope>
    <source>
        <strain>168</strain>
    </source>
</reference>
<reference key="2">
    <citation type="journal article" date="2002" name="FEMS Microbiol. Lett.">
        <title>MOSC domains: ancient, predicted sulfur-carrier domains, present in diverse metal-sulfur cluster biosynthesis proteins including Molybdenum cofactor sulfurases.</title>
        <authorList>
            <person name="Anantharaman V."/>
            <person name="Aravind L."/>
        </authorList>
    </citation>
    <scope>DOMAIN</scope>
</reference>
<reference key="3">
    <citation type="submission" date="2005-01" db="PDB data bank">
        <title>Crystal structure of APC1665, yuaD protein from Bacillus subtilis.</title>
        <authorList>
            <consortium name="Midwest center for structural genomics (MCSG)"/>
        </authorList>
    </citation>
    <scope>X-RAY CRYSTALLOGRAPHY (1.8 ANGSTROMS)</scope>
</reference>
<sequence>MWKRMTAKAEGLYIADTKSFVTKQMDKLDFDYGGIPGDLHFGLTKKAGAREPMFSRGTEIFNRRQISIVSIEECNEIALKMGVPRILPEWLGANVAVSGMPDLTSLKEGSRIIFPSGAALLCEGENDPCIQPGEVIQSYYPDQPKLASAFVRHALGIRGIVCIVERPGAVYTGDEIEVHSYQRKVKRKAERV</sequence>
<keyword id="KW-0002">3D-structure</keyword>
<keyword id="KW-1185">Reference proteome</keyword>
<evidence type="ECO:0000255" key="1">
    <source>
        <dbReference type="PROSITE-ProRule" id="PRU00670"/>
    </source>
</evidence>
<evidence type="ECO:0007829" key="2">
    <source>
        <dbReference type="PDB" id="1ORU"/>
    </source>
</evidence>
<name>YUAD_BACSU</name>